<reference key="1">
    <citation type="journal article" date="2000" name="DNA Res.">
        <title>Structural analysis of Arabidopsis thaliana chromosome 3. I. Sequence features of the regions of 4,504,864 bp covered by sixty P1 and TAC clones.</title>
        <authorList>
            <person name="Sato S."/>
            <person name="Nakamura Y."/>
            <person name="Kaneko T."/>
            <person name="Katoh T."/>
            <person name="Asamizu E."/>
            <person name="Tabata S."/>
        </authorList>
    </citation>
    <scope>NUCLEOTIDE SEQUENCE [LARGE SCALE GENOMIC DNA]</scope>
    <source>
        <strain>cv. Columbia</strain>
    </source>
</reference>
<reference key="2">
    <citation type="journal article" date="2017" name="Plant J.">
        <title>Araport11: a complete reannotation of the Arabidopsis thaliana reference genome.</title>
        <authorList>
            <person name="Cheng C.Y."/>
            <person name="Krishnakumar V."/>
            <person name="Chan A.P."/>
            <person name="Thibaud-Nissen F."/>
            <person name="Schobel S."/>
            <person name="Town C.D."/>
        </authorList>
    </citation>
    <scope>GENOME REANNOTATION</scope>
    <source>
        <strain>cv. Columbia</strain>
    </source>
</reference>
<reference key="3">
    <citation type="journal article" date="2003" name="Science">
        <title>Empirical analysis of transcriptional activity in the Arabidopsis genome.</title>
        <authorList>
            <person name="Yamada K."/>
            <person name="Lim J."/>
            <person name="Dale J.M."/>
            <person name="Chen H."/>
            <person name="Shinn P."/>
            <person name="Palm C.J."/>
            <person name="Southwick A.M."/>
            <person name="Wu H.C."/>
            <person name="Kim C.J."/>
            <person name="Nguyen M."/>
            <person name="Pham P.K."/>
            <person name="Cheuk R.F."/>
            <person name="Karlin-Newmann G."/>
            <person name="Liu S.X."/>
            <person name="Lam B."/>
            <person name="Sakano H."/>
            <person name="Wu T."/>
            <person name="Yu G."/>
            <person name="Miranda M."/>
            <person name="Quach H.L."/>
            <person name="Tripp M."/>
            <person name="Chang C.H."/>
            <person name="Lee J.M."/>
            <person name="Toriumi M.J."/>
            <person name="Chan M.M."/>
            <person name="Tang C.C."/>
            <person name="Onodera C.S."/>
            <person name="Deng J.M."/>
            <person name="Akiyama K."/>
            <person name="Ansari Y."/>
            <person name="Arakawa T."/>
            <person name="Banh J."/>
            <person name="Banno F."/>
            <person name="Bowser L."/>
            <person name="Brooks S.Y."/>
            <person name="Carninci P."/>
            <person name="Chao Q."/>
            <person name="Choy N."/>
            <person name="Enju A."/>
            <person name="Goldsmith A.D."/>
            <person name="Gurjal M."/>
            <person name="Hansen N.F."/>
            <person name="Hayashizaki Y."/>
            <person name="Johnson-Hopson C."/>
            <person name="Hsuan V.W."/>
            <person name="Iida K."/>
            <person name="Karnes M."/>
            <person name="Khan S."/>
            <person name="Koesema E."/>
            <person name="Ishida J."/>
            <person name="Jiang P.X."/>
            <person name="Jones T."/>
            <person name="Kawai J."/>
            <person name="Kamiya A."/>
            <person name="Meyers C."/>
            <person name="Nakajima M."/>
            <person name="Narusaka M."/>
            <person name="Seki M."/>
            <person name="Sakurai T."/>
            <person name="Satou M."/>
            <person name="Tamse R."/>
            <person name="Vaysberg M."/>
            <person name="Wallender E.K."/>
            <person name="Wong C."/>
            <person name="Yamamura Y."/>
            <person name="Yuan S."/>
            <person name="Shinozaki K."/>
            <person name="Davis R.W."/>
            <person name="Theologis A."/>
            <person name="Ecker J.R."/>
        </authorList>
    </citation>
    <scope>NUCLEOTIDE SEQUENCE [LARGE SCALE MRNA]</scope>
    <source>
        <strain>cv. Columbia</strain>
    </source>
</reference>
<reference key="4">
    <citation type="journal article" date="2003" name="Nucleic Acids Res.">
        <title>MFP1 is a thylakoid-associated, nucleoid-binding protein with a coiled-coil structure.</title>
        <authorList>
            <person name="Jeong S.Y."/>
            <person name="Rose A."/>
            <person name="Meier I."/>
        </authorList>
    </citation>
    <scope>FUNCTION</scope>
    <scope>SUBCELLULAR LOCATION</scope>
    <scope>DEVELOPMENTAL STAGE</scope>
    <scope>PTM</scope>
    <scope>DISRUPTION PHENOTYPE</scope>
    <scope>TOPOLOGY</scope>
</reference>
<reference key="5">
    <citation type="journal article" date="2006" name="Planta">
        <title>Dual location of MAR-binding, filament-like protein 1 in Arabidopsis, tobacco, and tomato.</title>
        <authorList>
            <person name="Samaniego R."/>
            <person name="Jeong S.Y."/>
            <person name="Meier I."/>
            <person name="de la Espina S.M."/>
        </authorList>
    </citation>
    <scope>SUBCELLULAR LOCATION</scope>
    <scope>DISRUPTION PHENOTYPE</scope>
    <scope>MOTIF</scope>
    <source>
        <strain evidence="10">cv. Columbia</strain>
    </source>
</reference>
<reference key="6">
    <citation type="journal article" date="2018" name="Plant Cell">
        <title>Two Plastidial Coiled-Coil Proteins Are Essential for Normal Starch Granule Initiation in Arabidopsis.</title>
        <authorList>
            <person name="Seung D."/>
            <person name="Schreier T.B."/>
            <person name="Buergy L."/>
            <person name="Eicke S."/>
            <person name="Zeeman S.C."/>
        </authorList>
    </citation>
    <scope>FUNCTION</scope>
    <scope>INTERACTION WITH PTST2</scope>
    <scope>SUBCELLULAR LOCATION</scope>
    <scope>DISRUPTION PHENOTYPE</scope>
</reference>
<reference key="7">
    <citation type="journal article" date="2024" name="Proc. Natl. Acad. Sci. U.S.A.">
        <title>MFP1 defines the subchloroplast location of starch granule initiation.</title>
        <authorList>
            <person name="Sharma M."/>
            <person name="Abt M.R."/>
            <person name="Eicke S."/>
            <person name="Ilse T.E."/>
            <person name="Liu C."/>
            <person name="Lucas M.S."/>
            <person name="Pfister B."/>
            <person name="Zeeman S.C."/>
        </authorList>
    </citation>
    <scope>FUNCTION</scope>
    <scope>SUBCELLULAR LOCATION</scope>
    <scope>PTM</scope>
    <scope>MUTAGENESIS OF 71-ALA--LEU-146</scope>
</reference>
<organism>
    <name type="scientific">Arabidopsis thaliana</name>
    <name type="common">Mouse-ear cress</name>
    <dbReference type="NCBI Taxonomy" id="3702"/>
    <lineage>
        <taxon>Eukaryota</taxon>
        <taxon>Viridiplantae</taxon>
        <taxon>Streptophyta</taxon>
        <taxon>Embryophyta</taxon>
        <taxon>Tracheophyta</taxon>
        <taxon>Spermatophyta</taxon>
        <taxon>Magnoliopsida</taxon>
        <taxon>eudicotyledons</taxon>
        <taxon>Gunneridae</taxon>
        <taxon>Pentapetalae</taxon>
        <taxon>rosids</taxon>
        <taxon>malvids</taxon>
        <taxon>Brassicales</taxon>
        <taxon>Brassicaceae</taxon>
        <taxon>Camelineae</taxon>
        <taxon>Arabidopsis</taxon>
    </lineage>
</organism>
<feature type="transit peptide" description="Chloroplast" evidence="3 14 15">
    <location>
        <begin position="1"/>
        <end position="41"/>
    </location>
</feature>
<feature type="transit peptide" description="Thylakoid" evidence="3 14">
    <location>
        <begin position="42"/>
        <end position="95"/>
    </location>
</feature>
<feature type="chain" id="PRO_0000096460" description="MAR-binding filament-like protein 1" evidence="3 14">
    <location>
        <begin position="96"/>
        <end position="726"/>
    </location>
</feature>
<feature type="topological domain" description="Lumenal, thylakoid" evidence="3 14">
    <location>
        <begin position="96"/>
        <end position="124"/>
    </location>
</feature>
<feature type="transmembrane region" description="Helical" evidence="3">
    <location>
        <begin position="125"/>
        <end position="145"/>
    </location>
</feature>
<feature type="topological domain" description="Stromal" evidence="3 16">
    <location>
        <begin position="146"/>
        <end position="726"/>
    </location>
</feature>
<feature type="region of interest" description="Disordered" evidence="4">
    <location>
        <begin position="678"/>
        <end position="726"/>
    </location>
</feature>
<feature type="coiled-coil region" evidence="3">
    <location>
        <begin position="144"/>
        <end position="691"/>
    </location>
</feature>
<feature type="short sequence motif" description="Nuclear localization signal" evidence="15">
    <location>
        <begin position="715"/>
        <end position="722"/>
    </location>
</feature>
<feature type="compositionally biased region" description="Polar residues" evidence="4">
    <location>
        <begin position="691"/>
        <end position="701"/>
    </location>
</feature>
<feature type="compositionally biased region" description="Basic residues" evidence="4">
    <location>
        <begin position="715"/>
        <end position="726"/>
    </location>
</feature>
<feature type="mutagenesis site" description="Loss of membrane-bound localization in leaves. Less numerous punctate structures within the chloroplasts in epidermal mature leaf cells and isolated mesophyll protoplasts. Lower starch granule numbers per chloroplast compared to wild-type." evidence="8">
    <location>
        <begin position="71"/>
        <end position="146"/>
    </location>
</feature>
<name>MFP1_ARATH</name>
<gene>
    <name evidence="9 10 11 12" type="primary">MFP1</name>
    <name evidence="11 12" type="ordered locus">At3g16000</name>
    <name type="ORF">MSL1.4</name>
</gene>
<dbReference type="EMBL" id="AB012247">
    <property type="protein sequence ID" value="BAB02666.1"/>
    <property type="status" value="ALT_SEQ"/>
    <property type="molecule type" value="Genomic_DNA"/>
</dbReference>
<dbReference type="EMBL" id="CP002686">
    <property type="protein sequence ID" value="AEE75761.1"/>
    <property type="molecule type" value="Genomic_DNA"/>
</dbReference>
<dbReference type="EMBL" id="BT008690">
    <property type="protein sequence ID" value="AAP40496.1"/>
    <property type="molecule type" value="mRNA"/>
</dbReference>
<dbReference type="RefSeq" id="NP_188221.2">
    <property type="nucleotide sequence ID" value="NM_112470.3"/>
</dbReference>
<dbReference type="SMR" id="Q9LW85"/>
<dbReference type="FunCoup" id="Q9LW85">
    <property type="interactions" value="1339"/>
</dbReference>
<dbReference type="STRING" id="3702.Q9LW85"/>
<dbReference type="iPTMnet" id="Q9LW85"/>
<dbReference type="PaxDb" id="3702-AT3G16000.1"/>
<dbReference type="ProteomicsDB" id="250621"/>
<dbReference type="EnsemblPlants" id="AT3G16000.1">
    <property type="protein sequence ID" value="AT3G16000.1"/>
    <property type="gene ID" value="AT3G16000"/>
</dbReference>
<dbReference type="GeneID" id="820845"/>
<dbReference type="Gramene" id="AT3G16000.1">
    <property type="protein sequence ID" value="AT3G16000.1"/>
    <property type="gene ID" value="AT3G16000"/>
</dbReference>
<dbReference type="KEGG" id="ath:AT3G16000"/>
<dbReference type="Araport" id="AT3G16000"/>
<dbReference type="TAIR" id="AT3G16000">
    <property type="gene designation" value="MFP1"/>
</dbReference>
<dbReference type="eggNOG" id="ENOG502QZ3X">
    <property type="taxonomic scope" value="Eukaryota"/>
</dbReference>
<dbReference type="HOGENOM" id="CLU_022159_0_0_1"/>
<dbReference type="InParanoid" id="Q9LW85"/>
<dbReference type="OMA" id="NVKTHFI"/>
<dbReference type="PhylomeDB" id="Q9LW85"/>
<dbReference type="PRO" id="PR:Q9LW85"/>
<dbReference type="Proteomes" id="UP000006548">
    <property type="component" value="Chromosome 3"/>
</dbReference>
<dbReference type="ExpressionAtlas" id="Q9LW85">
    <property type="expression patterns" value="baseline and differential"/>
</dbReference>
<dbReference type="GO" id="GO:0009507">
    <property type="term" value="C:chloroplast"/>
    <property type="evidence" value="ECO:0007005"/>
    <property type="project" value="TAIR"/>
</dbReference>
<dbReference type="GO" id="GO:0042644">
    <property type="term" value="C:chloroplast nucleoid"/>
    <property type="evidence" value="ECO:0007669"/>
    <property type="project" value="UniProtKB-SubCell"/>
</dbReference>
<dbReference type="GO" id="GO:0009534">
    <property type="term" value="C:chloroplast thylakoid"/>
    <property type="evidence" value="ECO:0007005"/>
    <property type="project" value="TAIR"/>
</dbReference>
<dbReference type="GO" id="GO:0009535">
    <property type="term" value="C:chloroplast thylakoid membrane"/>
    <property type="evidence" value="ECO:0000314"/>
    <property type="project" value="TAIR"/>
</dbReference>
<dbReference type="GO" id="GO:0005829">
    <property type="term" value="C:cytosol"/>
    <property type="evidence" value="ECO:0007005"/>
    <property type="project" value="TAIR"/>
</dbReference>
<dbReference type="GO" id="GO:0016363">
    <property type="term" value="C:nuclear matrix"/>
    <property type="evidence" value="ECO:0007669"/>
    <property type="project" value="UniProtKB-SubCell"/>
</dbReference>
<dbReference type="GO" id="GO:0042646">
    <property type="term" value="C:plastid nucleoid"/>
    <property type="evidence" value="ECO:0000314"/>
    <property type="project" value="TAIR"/>
</dbReference>
<dbReference type="GO" id="GO:0003677">
    <property type="term" value="F:DNA binding"/>
    <property type="evidence" value="ECO:0000314"/>
    <property type="project" value="TAIR"/>
</dbReference>
<dbReference type="GO" id="GO:0010581">
    <property type="term" value="P:regulation of starch biosynthetic process"/>
    <property type="evidence" value="ECO:0000315"/>
    <property type="project" value="TAIR"/>
</dbReference>
<dbReference type="GO" id="GO:0019252">
    <property type="term" value="P:starch biosynthetic process"/>
    <property type="evidence" value="ECO:0000315"/>
    <property type="project" value="TAIR"/>
</dbReference>
<dbReference type="SUPFAM" id="SSF57997">
    <property type="entry name" value="Tropomyosin"/>
    <property type="match status" value="1"/>
</dbReference>
<evidence type="ECO:0000250" key="1">
    <source>
        <dbReference type="UniProtKB" id="P93203"/>
    </source>
</evidence>
<evidence type="ECO:0000250" key="2">
    <source>
        <dbReference type="UniProtKB" id="Q9M7J4"/>
    </source>
</evidence>
<evidence type="ECO:0000255" key="3"/>
<evidence type="ECO:0000256" key="4">
    <source>
        <dbReference type="SAM" id="MobiDB-lite"/>
    </source>
</evidence>
<evidence type="ECO:0000269" key="5">
    <source>
    </source>
</evidence>
<evidence type="ECO:0000269" key="6">
    <source>
    </source>
</evidence>
<evidence type="ECO:0000269" key="7">
    <source>
    </source>
</evidence>
<evidence type="ECO:0000269" key="8">
    <source>
    </source>
</evidence>
<evidence type="ECO:0000303" key="9">
    <source>
    </source>
</evidence>
<evidence type="ECO:0000303" key="10">
    <source>
    </source>
</evidence>
<evidence type="ECO:0000303" key="11">
    <source>
    </source>
</evidence>
<evidence type="ECO:0000303" key="12">
    <source>
    </source>
</evidence>
<evidence type="ECO:0000305" key="13"/>
<evidence type="ECO:0000305" key="14">
    <source>
    </source>
</evidence>
<evidence type="ECO:0000305" key="15">
    <source>
    </source>
</evidence>
<evidence type="ECO:0000305" key="16">
    <source>
    </source>
</evidence>
<proteinExistence type="evidence at protein level"/>
<accession>Q9LW85</accession>
<accession>Q7Y1Z5</accession>
<keyword id="KW-0150">Chloroplast</keyword>
<keyword id="KW-0175">Coiled coil</keyword>
<keyword id="KW-0238">DNA-binding</keyword>
<keyword id="KW-0472">Membrane</keyword>
<keyword id="KW-0539">Nucleus</keyword>
<keyword id="KW-0934">Plastid</keyword>
<keyword id="KW-1185">Reference proteome</keyword>
<keyword id="KW-0750">Starch biosynthesis</keyword>
<keyword id="KW-0793">Thylakoid</keyword>
<keyword id="KW-0809">Transit peptide</keyword>
<keyword id="KW-0812">Transmembrane</keyword>
<keyword id="KW-1133">Transmembrane helix</keyword>
<comment type="function">
    <text evidence="1 5 7 8">DNA-binding protein required for the initiation of starch granules biosynthesis in leaf chloroplasts (PubMed:29866647). Anchored to the thylakoid membranes with its C-terminus facing into the stroma where it is essential for localizing PTST2 and SS4 to the stromal spaces between the thylakoid membranes in order to begin starch granule formation (PubMed:29866647, PubMed:38190535). Associated with leaf chloroplastic nucleoids in vivo (PubMed:12930969). Binds to various chloroplastic double-stranded DNA fragments without particular sequence specificity in vitro (PubMed:12930969). May function at the interface between nucleoids and thylakoids possibly by anchoring nucleoids to the thylakoid membrane system in mature chloroplasts (PubMed:12930969). Likely to participate in nuclear architecture by connecting chromatin with the nuclear matrix and potentially with the nuclear envelope (By similarity).</text>
</comment>
<comment type="subunit">
    <text evidence="7">Interacts with PTST2; the interaction is essential for the initiation of starch granules biosynthesis in leaf chloroplasts, for the correct location of the process in the stromal spaces between the thylakoid membranes, and for the association of PTST2 with the thylakoid membranes.</text>
</comment>
<comment type="subcellular location">
    <subcellularLocation>
        <location evidence="3 5 6 8">Plastid</location>
        <location evidence="3 5 6 8">Chloroplast</location>
    </subcellularLocation>
    <subcellularLocation>
        <location evidence="6 7">Plastid</location>
        <location evidence="6 7">Chloroplast thylakoid membrane</location>
        <topology evidence="3">Single-pass membrane protein</topology>
        <orientation evidence="2">Stromal side</orientation>
    </subcellularLocation>
    <subcellularLocation>
        <location evidence="2">Plastid</location>
        <location evidence="2">Chloroplast stroma</location>
        <location evidence="2">Chloroplast nucleoid</location>
    </subcellularLocation>
    <subcellularLocation>
        <location evidence="6">Nucleus</location>
    </subcellularLocation>
    <subcellularLocation>
        <location evidence="6">Nucleus matrix</location>
    </subcellularLocation>
    <text evidence="2 7 8">Is in the membrane-bound (insoluble) protein fraction of the leaves (PubMed:29866647). Forms punctate structures within the chloroplasts of epidermal mature leaf cells and isolated mesophyll protoplasts (PubMed:38190535). Distributed throughout chloroplasts locating to small patches (PubMed:29866647). Associates with thylakoid membranes in mature leaf chloroplasts. Has a direct physical interaction with nucleoids in mature leaf chloroplasts (By similarity).</text>
</comment>
<comment type="developmental stage">
    <text evidence="5">Expression increases during greening of etiolated seedlings correlating with chloroplast development (at potein level).</text>
</comment>
<comment type="domain">
    <text evidence="1">The C-terminal part is necessary for DNA-binding.</text>
</comment>
<comment type="PTM">
    <text evidence="14 16">Predicted to be translocated into the thylakoid by the Tat system. The position of the transit peptide cleavages have not been experimentally proven.</text>
</comment>
<comment type="disruption phenotype">
    <text evidence="5 6 7">Larger chloroplast starch granules than wild-type (PubMed:29866647). However, in most chloroplasts only one large starch granule is present, in contrast to many in wild-type (PubMed:29866647). No accumulation of ADP-glucose, the substrate for starch synthesis (PubMed:29866647). No effect in amylopectin and amylose biosynthesis (PubMed:29866647). Mislocalized PTST2 within chloroplasts (PubMed:29866647). Loss of DNA-binding activity in leaf chloroplasts (PubMed:12930969). Loss of both chloroplastic and nuclear localization in leaves (PubMed:16331467). Mfp1 pII1/mrc double mutant has a higher proportion of chloroplasts with no visible starch granule than either of the single mutants, and high accumulation of ADP-glucose (PubMed:29866647). PTST2 does not associate with thylakoid membranes in the double mutant (PubMed:29866647).</text>
</comment>
<comment type="sequence caution" evidence="13">
    <conflict type="erroneous gene model prediction">
        <sequence resource="EMBL-CDS" id="BAB02666"/>
    </conflict>
</comment>
<sequence>MGFLIGGSCFVPSVPLHSRFLSSPSSSSSSSPSSSQFGLLCSSNVAKFKRRRPTLASLNQEDGYEYDVASAKRRAFLLVGISVLPFLQLRSPALADERGNEIKTSKVDLETEVAVVSEGTSPNPFLALLNGLGIFSAGVLGALYALARQDTKAAEETIESLKNQLKDRERALVLKEKDFEAKLQHEQEERKKEVEKAKEEQLSLINQLNSAKDLVTELGRELSSEKKLCEKLKDQIESLENSLSKAGEDKEALETKLREKLDLVEGLQDRINLLSLELKDSEEKAQRFNASLAKKEAELKELNSIYTQTSRDLAEAKLEIKQQKEELIRTQSELDSKNSAIEELNTRITTLVAEKESYIQKLDSISKDYSALKLTSETQAAADAELISRKEQEIQQLNENLDRALDDVNKSKDKVADLTEKYEDSKRMLDIELTTVKNLRHELEGTKKTLQASRDRVSDLETMLDESRALCSKLESELAIVHEEWKEAKERYERNLDAEKQKNEISASELALEKDLRRRVKDELEGVTHELKESSVKNQSLQKELVEIYKKVETSNKELEEEKKTVLSLNKEVKGMEKQILMEREARKSLETDLEEAVKSLDEMNKNTSILSRELEKVNTHASNLEDEKEVLQRSLGEAKNASKEAKENVEDAHILVMSLGKEREVLEKKVKKLEEDLGSAKGEILRMRSQPDSVKAVNSTDNKEKSDNTVTVKKVVRRRKSSTSS</sequence>
<protein>
    <recommendedName>
        <fullName evidence="10 11 12">MAR-binding filament-like protein 1</fullName>
    </recommendedName>
    <alternativeName>
        <fullName evidence="9 10">AtMFP1</fullName>
    </alternativeName>
    <alternativeName>
        <fullName evidence="10">Matrix attachment region-binding filament-like protein 1</fullName>
    </alternativeName>
</protein>